<comment type="function">
    <text evidence="1">Cell wall formation.</text>
</comment>
<comment type="catalytic activity">
    <reaction evidence="1">
        <text>UDP-N-acetyl-alpha-D-muramate + NADP(+) = UDP-N-acetyl-3-O-(1-carboxyvinyl)-alpha-D-glucosamine + NADPH + H(+)</text>
        <dbReference type="Rhea" id="RHEA:12248"/>
        <dbReference type="ChEBI" id="CHEBI:15378"/>
        <dbReference type="ChEBI" id="CHEBI:57783"/>
        <dbReference type="ChEBI" id="CHEBI:58349"/>
        <dbReference type="ChEBI" id="CHEBI:68483"/>
        <dbReference type="ChEBI" id="CHEBI:70757"/>
        <dbReference type="EC" id="1.3.1.98"/>
    </reaction>
</comment>
<comment type="cofactor">
    <cofactor evidence="1">
        <name>FAD</name>
        <dbReference type="ChEBI" id="CHEBI:57692"/>
    </cofactor>
</comment>
<comment type="pathway">
    <text evidence="1">Cell wall biogenesis; peptidoglycan biosynthesis.</text>
</comment>
<comment type="subcellular location">
    <subcellularLocation>
        <location evidence="1">Cytoplasm</location>
    </subcellularLocation>
</comment>
<comment type="similarity">
    <text evidence="1">Belongs to the MurB family.</text>
</comment>
<sequence>MDKENFTRLRGELFCDHPLARYTSWRVGGKAERFYRPADLFDLQDFLTQLPSDEPLTWLGLGSNVLIRDGGIKGTVILTLNRLKELSVVNSQLAFREKSGTEDFFSGNGKTIIRAEAGVTCAKLAKFCVSQGLEDGAFFAGIPGTVGGALAMNAGAFGGETWRTVIGVETMNHQGEILKRTPDEFKIHYRQVEGLENQFFIAGYFCFNHGDPDKAKTAINALLKKRNLSQPIGKYSCGSVFRNPPGDYAARLIESAGLKGKSIGSAEVSEKHANFILNKGNASAADIEALIHYVAQHVSQIHGIQLVKEVHIIGRS</sequence>
<proteinExistence type="inferred from homology"/>
<accession>B6J5K1</accession>
<organism>
    <name type="scientific">Coxiella burnetii (strain CbuK_Q154)</name>
    <name type="common">Coxiella burnetii (strain Q154)</name>
    <dbReference type="NCBI Taxonomy" id="434924"/>
    <lineage>
        <taxon>Bacteria</taxon>
        <taxon>Pseudomonadati</taxon>
        <taxon>Pseudomonadota</taxon>
        <taxon>Gammaproteobacteria</taxon>
        <taxon>Legionellales</taxon>
        <taxon>Coxiellaceae</taxon>
        <taxon>Coxiella</taxon>
    </lineage>
</organism>
<reference key="1">
    <citation type="journal article" date="2009" name="Infect. Immun.">
        <title>Comparative genomics reveal extensive transposon-mediated genomic plasticity and diversity among potential effector proteins within the genus Coxiella.</title>
        <authorList>
            <person name="Beare P.A."/>
            <person name="Unsworth N."/>
            <person name="Andoh M."/>
            <person name="Voth D.E."/>
            <person name="Omsland A."/>
            <person name="Gilk S.D."/>
            <person name="Williams K.P."/>
            <person name="Sobral B.W."/>
            <person name="Kupko J.J. III"/>
            <person name="Porcella S.F."/>
            <person name="Samuel J.E."/>
            <person name="Heinzen R.A."/>
        </authorList>
    </citation>
    <scope>NUCLEOTIDE SEQUENCE [LARGE SCALE GENOMIC DNA]</scope>
    <source>
        <strain>CbuK_Q154</strain>
    </source>
</reference>
<evidence type="ECO:0000255" key="1">
    <source>
        <dbReference type="HAMAP-Rule" id="MF_00037"/>
    </source>
</evidence>
<feature type="chain" id="PRO_1000191420" description="UDP-N-acetylenolpyruvoylglucosamine reductase">
    <location>
        <begin position="1"/>
        <end position="316"/>
    </location>
</feature>
<feature type="domain" description="FAD-binding PCMH-type" evidence="1">
    <location>
        <begin position="27"/>
        <end position="225"/>
    </location>
</feature>
<feature type="active site" evidence="1">
    <location>
        <position position="190"/>
    </location>
</feature>
<feature type="active site" description="Proton donor" evidence="1">
    <location>
        <position position="239"/>
    </location>
</feature>
<feature type="active site" evidence="1">
    <location>
        <position position="309"/>
    </location>
</feature>
<dbReference type="EC" id="1.3.1.98" evidence="1"/>
<dbReference type="EMBL" id="CP001020">
    <property type="protein sequence ID" value="ACJ21027.1"/>
    <property type="molecule type" value="Genomic_DNA"/>
</dbReference>
<dbReference type="RefSeq" id="WP_005769489.1">
    <property type="nucleotide sequence ID" value="NC_011528.1"/>
</dbReference>
<dbReference type="SMR" id="B6J5K1"/>
<dbReference type="KEGG" id="cbc:CbuK_1917"/>
<dbReference type="HOGENOM" id="CLU_035304_1_0_6"/>
<dbReference type="UniPathway" id="UPA00219"/>
<dbReference type="GO" id="GO:0005829">
    <property type="term" value="C:cytosol"/>
    <property type="evidence" value="ECO:0007669"/>
    <property type="project" value="TreeGrafter"/>
</dbReference>
<dbReference type="GO" id="GO:0071949">
    <property type="term" value="F:FAD binding"/>
    <property type="evidence" value="ECO:0007669"/>
    <property type="project" value="InterPro"/>
</dbReference>
<dbReference type="GO" id="GO:0008762">
    <property type="term" value="F:UDP-N-acetylmuramate dehydrogenase activity"/>
    <property type="evidence" value="ECO:0007669"/>
    <property type="project" value="UniProtKB-UniRule"/>
</dbReference>
<dbReference type="GO" id="GO:0051301">
    <property type="term" value="P:cell division"/>
    <property type="evidence" value="ECO:0007669"/>
    <property type="project" value="UniProtKB-KW"/>
</dbReference>
<dbReference type="GO" id="GO:0071555">
    <property type="term" value="P:cell wall organization"/>
    <property type="evidence" value="ECO:0007669"/>
    <property type="project" value="UniProtKB-KW"/>
</dbReference>
<dbReference type="GO" id="GO:0009252">
    <property type="term" value="P:peptidoglycan biosynthetic process"/>
    <property type="evidence" value="ECO:0007669"/>
    <property type="project" value="UniProtKB-UniRule"/>
</dbReference>
<dbReference type="GO" id="GO:0008360">
    <property type="term" value="P:regulation of cell shape"/>
    <property type="evidence" value="ECO:0007669"/>
    <property type="project" value="UniProtKB-KW"/>
</dbReference>
<dbReference type="Gene3D" id="3.30.465.10">
    <property type="match status" value="1"/>
</dbReference>
<dbReference type="Gene3D" id="3.90.78.10">
    <property type="entry name" value="UDP-N-acetylenolpyruvoylglucosamine reductase, C-terminal domain"/>
    <property type="match status" value="1"/>
</dbReference>
<dbReference type="Gene3D" id="3.30.43.10">
    <property type="entry name" value="Uridine Diphospho-n-acetylenolpyruvylglucosamine Reductase, domain 2"/>
    <property type="match status" value="1"/>
</dbReference>
<dbReference type="HAMAP" id="MF_00037">
    <property type="entry name" value="MurB"/>
    <property type="match status" value="1"/>
</dbReference>
<dbReference type="InterPro" id="IPR016166">
    <property type="entry name" value="FAD-bd_PCMH"/>
</dbReference>
<dbReference type="InterPro" id="IPR036318">
    <property type="entry name" value="FAD-bd_PCMH-like_sf"/>
</dbReference>
<dbReference type="InterPro" id="IPR016167">
    <property type="entry name" value="FAD-bd_PCMH_sub1"/>
</dbReference>
<dbReference type="InterPro" id="IPR016169">
    <property type="entry name" value="FAD-bd_PCMH_sub2"/>
</dbReference>
<dbReference type="InterPro" id="IPR003170">
    <property type="entry name" value="MurB"/>
</dbReference>
<dbReference type="InterPro" id="IPR011601">
    <property type="entry name" value="MurB_C"/>
</dbReference>
<dbReference type="InterPro" id="IPR036635">
    <property type="entry name" value="MurB_C_sf"/>
</dbReference>
<dbReference type="InterPro" id="IPR006094">
    <property type="entry name" value="Oxid_FAD_bind_N"/>
</dbReference>
<dbReference type="NCBIfam" id="TIGR00179">
    <property type="entry name" value="murB"/>
    <property type="match status" value="1"/>
</dbReference>
<dbReference type="NCBIfam" id="NF010480">
    <property type="entry name" value="PRK13905.1"/>
    <property type="match status" value="1"/>
</dbReference>
<dbReference type="PANTHER" id="PTHR21071">
    <property type="entry name" value="UDP-N-ACETYLENOLPYRUVOYLGLUCOSAMINE REDUCTASE"/>
    <property type="match status" value="1"/>
</dbReference>
<dbReference type="PANTHER" id="PTHR21071:SF4">
    <property type="entry name" value="UDP-N-ACETYLENOLPYRUVOYLGLUCOSAMINE REDUCTASE"/>
    <property type="match status" value="1"/>
</dbReference>
<dbReference type="Pfam" id="PF01565">
    <property type="entry name" value="FAD_binding_4"/>
    <property type="match status" value="1"/>
</dbReference>
<dbReference type="Pfam" id="PF02873">
    <property type="entry name" value="MurB_C"/>
    <property type="match status" value="1"/>
</dbReference>
<dbReference type="SUPFAM" id="SSF56176">
    <property type="entry name" value="FAD-binding/transporter-associated domain-like"/>
    <property type="match status" value="1"/>
</dbReference>
<dbReference type="SUPFAM" id="SSF56194">
    <property type="entry name" value="Uridine diphospho-N-Acetylenolpyruvylglucosamine reductase, MurB, C-terminal domain"/>
    <property type="match status" value="1"/>
</dbReference>
<dbReference type="PROSITE" id="PS51387">
    <property type="entry name" value="FAD_PCMH"/>
    <property type="match status" value="1"/>
</dbReference>
<protein>
    <recommendedName>
        <fullName evidence="1">UDP-N-acetylenolpyruvoylglucosamine reductase</fullName>
        <ecNumber evidence="1">1.3.1.98</ecNumber>
    </recommendedName>
    <alternativeName>
        <fullName evidence="1">UDP-N-acetylmuramate dehydrogenase</fullName>
    </alternativeName>
</protein>
<gene>
    <name evidence="1" type="primary">murB</name>
    <name type="ordered locus">CbuK_1917</name>
</gene>
<keyword id="KW-0131">Cell cycle</keyword>
<keyword id="KW-0132">Cell division</keyword>
<keyword id="KW-0133">Cell shape</keyword>
<keyword id="KW-0961">Cell wall biogenesis/degradation</keyword>
<keyword id="KW-0963">Cytoplasm</keyword>
<keyword id="KW-0274">FAD</keyword>
<keyword id="KW-0285">Flavoprotein</keyword>
<keyword id="KW-0521">NADP</keyword>
<keyword id="KW-0560">Oxidoreductase</keyword>
<keyword id="KW-0573">Peptidoglycan synthesis</keyword>
<name>MURB_COXB1</name>